<sequence length="394" mass="43482">MSKEKFKRSKPHINVGTIGHVDHGKTTLTSAITTVLSKKYGGAACAFDQIDNAPEEKARGITINTSHVEYDTSIRHYAHVDCPGHADYIKNMITGAAQMDGAILVVAATDGPMPQTREHILLGRQVGVPYIVVFLNKCDMVDDEELLELVEMEVRDLLTQYDFPGDSTPIVRGSALKALEGDPQWEQKILDLSNYLDTYIPEPKRSIDQPFLLPIEDVFSISGRGTVVTGRIERGIIKVGEEVEIVGIKSTVKTICTGVEMFRKLLDEGRAGENVGVLLRGTKRDDIERGQVLAKPGTITPHIKFESEVYVLSKEEGGRHTPFFKGYRPQFYFRTTDVTGSVELPEDMEMVMPGDNVKMVITLIHPIAMSDGLRFAIREGGKTVGAGIVVKVLQ</sequence>
<reference key="1">
    <citation type="journal article" date="2003" name="Proc. Natl. Acad. Sci. U.S.A.">
        <title>Reductive genome evolution in Buchnera aphidicola.</title>
        <authorList>
            <person name="van Ham R.C.H.J."/>
            <person name="Kamerbeek J."/>
            <person name="Palacios C."/>
            <person name="Rausell C."/>
            <person name="Abascal F."/>
            <person name="Bastolla U."/>
            <person name="Fernandez J.M."/>
            <person name="Jimenez L."/>
            <person name="Postigo M."/>
            <person name="Silva F.J."/>
            <person name="Tamames J."/>
            <person name="Viguera E."/>
            <person name="Latorre A."/>
            <person name="Valencia A."/>
            <person name="Moran F."/>
            <person name="Moya A."/>
        </authorList>
    </citation>
    <scope>NUCLEOTIDE SEQUENCE [LARGE SCALE GENOMIC DNA]</scope>
    <source>
        <strain>Bp</strain>
    </source>
</reference>
<dbReference type="EC" id="3.6.5.3" evidence="2"/>
<dbReference type="EMBL" id="AE016826">
    <property type="protein sequence ID" value="AAO27175.1"/>
    <property type="molecule type" value="Genomic_DNA"/>
</dbReference>
<dbReference type="RefSeq" id="WP_011091576.1">
    <property type="nucleotide sequence ID" value="NC_004545.1"/>
</dbReference>
<dbReference type="SMR" id="P59506"/>
<dbReference type="STRING" id="224915.bbp_469"/>
<dbReference type="KEGG" id="bab:bbp_469"/>
<dbReference type="eggNOG" id="COG0050">
    <property type="taxonomic scope" value="Bacteria"/>
</dbReference>
<dbReference type="HOGENOM" id="CLU_007265_0_2_6"/>
<dbReference type="OrthoDB" id="9803139at2"/>
<dbReference type="Proteomes" id="UP000000601">
    <property type="component" value="Chromosome"/>
</dbReference>
<dbReference type="GO" id="GO:0005829">
    <property type="term" value="C:cytosol"/>
    <property type="evidence" value="ECO:0007669"/>
    <property type="project" value="TreeGrafter"/>
</dbReference>
<dbReference type="GO" id="GO:0005525">
    <property type="term" value="F:GTP binding"/>
    <property type="evidence" value="ECO:0007669"/>
    <property type="project" value="UniProtKB-UniRule"/>
</dbReference>
<dbReference type="GO" id="GO:0003924">
    <property type="term" value="F:GTPase activity"/>
    <property type="evidence" value="ECO:0007669"/>
    <property type="project" value="InterPro"/>
</dbReference>
<dbReference type="GO" id="GO:0097216">
    <property type="term" value="F:guanosine tetraphosphate binding"/>
    <property type="evidence" value="ECO:0007669"/>
    <property type="project" value="UniProtKB-ARBA"/>
</dbReference>
<dbReference type="GO" id="GO:0003746">
    <property type="term" value="F:translation elongation factor activity"/>
    <property type="evidence" value="ECO:0007669"/>
    <property type="project" value="UniProtKB-UniRule"/>
</dbReference>
<dbReference type="CDD" id="cd01884">
    <property type="entry name" value="EF_Tu"/>
    <property type="match status" value="1"/>
</dbReference>
<dbReference type="CDD" id="cd03697">
    <property type="entry name" value="EFTU_II"/>
    <property type="match status" value="1"/>
</dbReference>
<dbReference type="CDD" id="cd03707">
    <property type="entry name" value="EFTU_III"/>
    <property type="match status" value="1"/>
</dbReference>
<dbReference type="FunFam" id="2.40.30.10:FF:000001">
    <property type="entry name" value="Elongation factor Tu"/>
    <property type="match status" value="1"/>
</dbReference>
<dbReference type="FunFam" id="3.40.50.300:FF:000003">
    <property type="entry name" value="Elongation factor Tu"/>
    <property type="match status" value="1"/>
</dbReference>
<dbReference type="Gene3D" id="3.40.50.300">
    <property type="entry name" value="P-loop containing nucleotide triphosphate hydrolases"/>
    <property type="match status" value="1"/>
</dbReference>
<dbReference type="Gene3D" id="2.40.30.10">
    <property type="entry name" value="Translation factors"/>
    <property type="match status" value="2"/>
</dbReference>
<dbReference type="HAMAP" id="MF_00118_B">
    <property type="entry name" value="EF_Tu_B"/>
    <property type="match status" value="1"/>
</dbReference>
<dbReference type="InterPro" id="IPR041709">
    <property type="entry name" value="EF-Tu_GTP-bd"/>
</dbReference>
<dbReference type="InterPro" id="IPR050055">
    <property type="entry name" value="EF-Tu_GTPase"/>
</dbReference>
<dbReference type="InterPro" id="IPR004161">
    <property type="entry name" value="EFTu-like_2"/>
</dbReference>
<dbReference type="InterPro" id="IPR033720">
    <property type="entry name" value="EFTU_2"/>
</dbReference>
<dbReference type="InterPro" id="IPR031157">
    <property type="entry name" value="G_TR_CS"/>
</dbReference>
<dbReference type="InterPro" id="IPR027417">
    <property type="entry name" value="P-loop_NTPase"/>
</dbReference>
<dbReference type="InterPro" id="IPR005225">
    <property type="entry name" value="Small_GTP-bd"/>
</dbReference>
<dbReference type="InterPro" id="IPR000795">
    <property type="entry name" value="T_Tr_GTP-bd_dom"/>
</dbReference>
<dbReference type="InterPro" id="IPR009000">
    <property type="entry name" value="Transl_B-barrel_sf"/>
</dbReference>
<dbReference type="InterPro" id="IPR009001">
    <property type="entry name" value="Transl_elong_EF1A/Init_IF2_C"/>
</dbReference>
<dbReference type="InterPro" id="IPR004541">
    <property type="entry name" value="Transl_elong_EFTu/EF1A_bac/org"/>
</dbReference>
<dbReference type="InterPro" id="IPR004160">
    <property type="entry name" value="Transl_elong_EFTu/EF1A_C"/>
</dbReference>
<dbReference type="NCBIfam" id="TIGR00485">
    <property type="entry name" value="EF-Tu"/>
    <property type="match status" value="1"/>
</dbReference>
<dbReference type="NCBIfam" id="NF000766">
    <property type="entry name" value="PRK00049.1"/>
    <property type="match status" value="1"/>
</dbReference>
<dbReference type="NCBIfam" id="NF009372">
    <property type="entry name" value="PRK12735.1"/>
    <property type="match status" value="1"/>
</dbReference>
<dbReference type="NCBIfam" id="NF009373">
    <property type="entry name" value="PRK12736.1"/>
    <property type="match status" value="1"/>
</dbReference>
<dbReference type="NCBIfam" id="TIGR00231">
    <property type="entry name" value="small_GTP"/>
    <property type="match status" value="1"/>
</dbReference>
<dbReference type="PANTHER" id="PTHR43721:SF22">
    <property type="entry name" value="ELONGATION FACTOR TU, MITOCHONDRIAL"/>
    <property type="match status" value="1"/>
</dbReference>
<dbReference type="PANTHER" id="PTHR43721">
    <property type="entry name" value="ELONGATION FACTOR TU-RELATED"/>
    <property type="match status" value="1"/>
</dbReference>
<dbReference type="Pfam" id="PF00009">
    <property type="entry name" value="GTP_EFTU"/>
    <property type="match status" value="1"/>
</dbReference>
<dbReference type="Pfam" id="PF03144">
    <property type="entry name" value="GTP_EFTU_D2"/>
    <property type="match status" value="1"/>
</dbReference>
<dbReference type="Pfam" id="PF03143">
    <property type="entry name" value="GTP_EFTU_D3"/>
    <property type="match status" value="1"/>
</dbReference>
<dbReference type="PRINTS" id="PR00315">
    <property type="entry name" value="ELONGATNFCT"/>
</dbReference>
<dbReference type="SUPFAM" id="SSF50465">
    <property type="entry name" value="EF-Tu/eEF-1alpha/eIF2-gamma C-terminal domain"/>
    <property type="match status" value="1"/>
</dbReference>
<dbReference type="SUPFAM" id="SSF52540">
    <property type="entry name" value="P-loop containing nucleoside triphosphate hydrolases"/>
    <property type="match status" value="1"/>
</dbReference>
<dbReference type="SUPFAM" id="SSF50447">
    <property type="entry name" value="Translation proteins"/>
    <property type="match status" value="1"/>
</dbReference>
<dbReference type="PROSITE" id="PS00301">
    <property type="entry name" value="G_TR_1"/>
    <property type="match status" value="1"/>
</dbReference>
<dbReference type="PROSITE" id="PS51722">
    <property type="entry name" value="G_TR_2"/>
    <property type="match status" value="1"/>
</dbReference>
<keyword id="KW-0963">Cytoplasm</keyword>
<keyword id="KW-0251">Elongation factor</keyword>
<keyword id="KW-0342">GTP-binding</keyword>
<keyword id="KW-0378">Hydrolase</keyword>
<keyword id="KW-0460">Magnesium</keyword>
<keyword id="KW-0479">Metal-binding</keyword>
<keyword id="KW-0547">Nucleotide-binding</keyword>
<keyword id="KW-0648">Protein biosynthesis</keyword>
<keyword id="KW-1185">Reference proteome</keyword>
<evidence type="ECO:0000250" key="1"/>
<evidence type="ECO:0000255" key="2">
    <source>
        <dbReference type="HAMAP-Rule" id="MF_00118"/>
    </source>
</evidence>
<gene>
    <name evidence="2" type="primary">tuf</name>
    <name type="ordered locus">bbp_469</name>
</gene>
<organism>
    <name type="scientific">Buchnera aphidicola subsp. Baizongia pistaciae (strain Bp)</name>
    <dbReference type="NCBI Taxonomy" id="224915"/>
    <lineage>
        <taxon>Bacteria</taxon>
        <taxon>Pseudomonadati</taxon>
        <taxon>Pseudomonadota</taxon>
        <taxon>Gammaproteobacteria</taxon>
        <taxon>Enterobacterales</taxon>
        <taxon>Erwiniaceae</taxon>
        <taxon>Buchnera</taxon>
    </lineage>
</organism>
<name>EFTU_BUCBP</name>
<accession>P59506</accession>
<proteinExistence type="inferred from homology"/>
<comment type="function">
    <text evidence="2">GTP hydrolase that promotes the GTP-dependent binding of aminoacyl-tRNA to the A-site of ribosomes during protein biosynthesis.</text>
</comment>
<comment type="catalytic activity">
    <reaction evidence="2">
        <text>GTP + H2O = GDP + phosphate + H(+)</text>
        <dbReference type="Rhea" id="RHEA:19669"/>
        <dbReference type="ChEBI" id="CHEBI:15377"/>
        <dbReference type="ChEBI" id="CHEBI:15378"/>
        <dbReference type="ChEBI" id="CHEBI:37565"/>
        <dbReference type="ChEBI" id="CHEBI:43474"/>
        <dbReference type="ChEBI" id="CHEBI:58189"/>
        <dbReference type="EC" id="3.6.5.3"/>
    </reaction>
    <physiologicalReaction direction="left-to-right" evidence="2">
        <dbReference type="Rhea" id="RHEA:19670"/>
    </physiologicalReaction>
</comment>
<comment type="subunit">
    <text evidence="2">Monomer.</text>
</comment>
<comment type="subcellular location">
    <subcellularLocation>
        <location evidence="2">Cytoplasm</location>
    </subcellularLocation>
</comment>
<comment type="similarity">
    <text evidence="2">Belongs to the TRAFAC class translation factor GTPase superfamily. Classic translation factor GTPase family. EF-Tu/EF-1A subfamily.</text>
</comment>
<protein>
    <recommendedName>
        <fullName evidence="2">Elongation factor Tu</fullName>
        <shortName evidence="2">EF-Tu</shortName>
        <ecNumber evidence="2">3.6.5.3</ecNumber>
    </recommendedName>
</protein>
<feature type="chain" id="PRO_0000091298" description="Elongation factor Tu">
    <location>
        <begin position="1"/>
        <end position="394"/>
    </location>
</feature>
<feature type="domain" description="tr-type G">
    <location>
        <begin position="10"/>
        <end position="204"/>
    </location>
</feature>
<feature type="region of interest" description="G1" evidence="1">
    <location>
        <begin position="19"/>
        <end position="26"/>
    </location>
</feature>
<feature type="region of interest" description="G2" evidence="1">
    <location>
        <begin position="60"/>
        <end position="64"/>
    </location>
</feature>
<feature type="region of interest" description="G3" evidence="1">
    <location>
        <begin position="81"/>
        <end position="84"/>
    </location>
</feature>
<feature type="region of interest" description="G4" evidence="1">
    <location>
        <begin position="136"/>
        <end position="139"/>
    </location>
</feature>
<feature type="region of interest" description="G5" evidence="1">
    <location>
        <begin position="174"/>
        <end position="176"/>
    </location>
</feature>
<feature type="binding site" evidence="2">
    <location>
        <begin position="19"/>
        <end position="26"/>
    </location>
    <ligand>
        <name>GTP</name>
        <dbReference type="ChEBI" id="CHEBI:37565"/>
    </ligand>
</feature>
<feature type="binding site" evidence="2">
    <location>
        <position position="26"/>
    </location>
    <ligand>
        <name>Mg(2+)</name>
        <dbReference type="ChEBI" id="CHEBI:18420"/>
    </ligand>
</feature>
<feature type="binding site" evidence="2">
    <location>
        <begin position="81"/>
        <end position="85"/>
    </location>
    <ligand>
        <name>GTP</name>
        <dbReference type="ChEBI" id="CHEBI:37565"/>
    </ligand>
</feature>
<feature type="binding site" evidence="2">
    <location>
        <begin position="136"/>
        <end position="139"/>
    </location>
    <ligand>
        <name>GTP</name>
        <dbReference type="ChEBI" id="CHEBI:37565"/>
    </ligand>
</feature>